<feature type="chain" id="PRO_0000111565" description="Ribonuclease HII">
    <location>
        <begin position="1"/>
        <end position="272"/>
    </location>
</feature>
<feature type="domain" description="RNase H type-2" evidence="2">
    <location>
        <begin position="87"/>
        <end position="272"/>
    </location>
</feature>
<feature type="binding site" evidence="1">
    <location>
        <position position="93"/>
    </location>
    <ligand>
        <name>a divalent metal cation</name>
        <dbReference type="ChEBI" id="CHEBI:60240"/>
    </ligand>
</feature>
<feature type="binding site" evidence="1">
    <location>
        <position position="94"/>
    </location>
    <ligand>
        <name>a divalent metal cation</name>
        <dbReference type="ChEBI" id="CHEBI:60240"/>
    </ligand>
</feature>
<feature type="binding site" evidence="1">
    <location>
        <position position="188"/>
    </location>
    <ligand>
        <name>a divalent metal cation</name>
        <dbReference type="ChEBI" id="CHEBI:60240"/>
    </ligand>
</feature>
<dbReference type="EC" id="3.1.26.4" evidence="1"/>
<dbReference type="EMBL" id="BA000016">
    <property type="protein sequence ID" value="BAB81412.1"/>
    <property type="molecule type" value="Genomic_DNA"/>
</dbReference>
<dbReference type="RefSeq" id="WP_011010573.1">
    <property type="nucleotide sequence ID" value="NC_003366.1"/>
</dbReference>
<dbReference type="SMR" id="Q8XJQ0"/>
<dbReference type="STRING" id="195102.gene:10490970"/>
<dbReference type="KEGG" id="cpe:CPE1706"/>
<dbReference type="HOGENOM" id="CLU_036532_2_1_9"/>
<dbReference type="Proteomes" id="UP000000818">
    <property type="component" value="Chromosome"/>
</dbReference>
<dbReference type="GO" id="GO:0005737">
    <property type="term" value="C:cytoplasm"/>
    <property type="evidence" value="ECO:0007669"/>
    <property type="project" value="UniProtKB-SubCell"/>
</dbReference>
<dbReference type="GO" id="GO:0032299">
    <property type="term" value="C:ribonuclease H2 complex"/>
    <property type="evidence" value="ECO:0007669"/>
    <property type="project" value="TreeGrafter"/>
</dbReference>
<dbReference type="GO" id="GO:0030145">
    <property type="term" value="F:manganese ion binding"/>
    <property type="evidence" value="ECO:0007669"/>
    <property type="project" value="UniProtKB-UniRule"/>
</dbReference>
<dbReference type="GO" id="GO:0003723">
    <property type="term" value="F:RNA binding"/>
    <property type="evidence" value="ECO:0007669"/>
    <property type="project" value="InterPro"/>
</dbReference>
<dbReference type="GO" id="GO:0004523">
    <property type="term" value="F:RNA-DNA hybrid ribonuclease activity"/>
    <property type="evidence" value="ECO:0007669"/>
    <property type="project" value="UniProtKB-UniRule"/>
</dbReference>
<dbReference type="GO" id="GO:0043137">
    <property type="term" value="P:DNA replication, removal of RNA primer"/>
    <property type="evidence" value="ECO:0007669"/>
    <property type="project" value="TreeGrafter"/>
</dbReference>
<dbReference type="GO" id="GO:0006298">
    <property type="term" value="P:mismatch repair"/>
    <property type="evidence" value="ECO:0007669"/>
    <property type="project" value="TreeGrafter"/>
</dbReference>
<dbReference type="CDD" id="cd07182">
    <property type="entry name" value="RNase_HII_bacteria_HII_like"/>
    <property type="match status" value="1"/>
</dbReference>
<dbReference type="Gene3D" id="3.30.420.10">
    <property type="entry name" value="Ribonuclease H-like superfamily/Ribonuclease H"/>
    <property type="match status" value="1"/>
</dbReference>
<dbReference type="HAMAP" id="MF_00052_B">
    <property type="entry name" value="RNase_HII_B"/>
    <property type="match status" value="1"/>
</dbReference>
<dbReference type="InterPro" id="IPR022898">
    <property type="entry name" value="RNase_HII"/>
</dbReference>
<dbReference type="InterPro" id="IPR001352">
    <property type="entry name" value="RNase_HII/HIII"/>
</dbReference>
<dbReference type="InterPro" id="IPR024567">
    <property type="entry name" value="RNase_HII/HIII_dom"/>
</dbReference>
<dbReference type="InterPro" id="IPR012337">
    <property type="entry name" value="RNaseH-like_sf"/>
</dbReference>
<dbReference type="InterPro" id="IPR036397">
    <property type="entry name" value="RNaseH_sf"/>
</dbReference>
<dbReference type="NCBIfam" id="NF000594">
    <property type="entry name" value="PRK00015.1-1"/>
    <property type="match status" value="1"/>
</dbReference>
<dbReference type="NCBIfam" id="NF000595">
    <property type="entry name" value="PRK00015.1-3"/>
    <property type="match status" value="1"/>
</dbReference>
<dbReference type="PANTHER" id="PTHR10954">
    <property type="entry name" value="RIBONUCLEASE H2 SUBUNIT A"/>
    <property type="match status" value="1"/>
</dbReference>
<dbReference type="PANTHER" id="PTHR10954:SF18">
    <property type="entry name" value="RIBONUCLEASE HII"/>
    <property type="match status" value="1"/>
</dbReference>
<dbReference type="Pfam" id="PF01351">
    <property type="entry name" value="RNase_HII"/>
    <property type="match status" value="1"/>
</dbReference>
<dbReference type="SUPFAM" id="SSF53098">
    <property type="entry name" value="Ribonuclease H-like"/>
    <property type="match status" value="1"/>
</dbReference>
<dbReference type="PROSITE" id="PS51975">
    <property type="entry name" value="RNASE_H_2"/>
    <property type="match status" value="1"/>
</dbReference>
<accession>Q8XJQ0</accession>
<comment type="function">
    <text evidence="1">Endonuclease that specifically degrades the RNA of RNA-DNA hybrids.</text>
</comment>
<comment type="catalytic activity">
    <reaction evidence="1">
        <text>Endonucleolytic cleavage to 5'-phosphomonoester.</text>
        <dbReference type="EC" id="3.1.26.4"/>
    </reaction>
</comment>
<comment type="cofactor">
    <cofactor evidence="1">
        <name>Mn(2+)</name>
        <dbReference type="ChEBI" id="CHEBI:29035"/>
    </cofactor>
    <cofactor evidence="1">
        <name>Mg(2+)</name>
        <dbReference type="ChEBI" id="CHEBI:18420"/>
    </cofactor>
    <text evidence="1">Manganese or magnesium. Binds 1 divalent metal ion per monomer in the absence of substrate. May bind a second metal ion after substrate binding.</text>
</comment>
<comment type="subcellular location">
    <subcellularLocation>
        <location evidence="1">Cytoplasm</location>
    </subcellularLocation>
</comment>
<comment type="similarity">
    <text evidence="1">Belongs to the RNase HII family.</text>
</comment>
<gene>
    <name evidence="1" type="primary">rnhB</name>
    <name type="synonym">rnh</name>
    <name type="ordered locus">CPE1706</name>
</gene>
<name>RNH2_CLOPE</name>
<organism>
    <name type="scientific">Clostridium perfringens (strain 13 / Type A)</name>
    <dbReference type="NCBI Taxonomy" id="195102"/>
    <lineage>
        <taxon>Bacteria</taxon>
        <taxon>Bacillati</taxon>
        <taxon>Bacillota</taxon>
        <taxon>Clostridia</taxon>
        <taxon>Eubacteriales</taxon>
        <taxon>Clostridiaceae</taxon>
        <taxon>Clostridium</taxon>
    </lineage>
</organism>
<evidence type="ECO:0000255" key="1">
    <source>
        <dbReference type="HAMAP-Rule" id="MF_00052"/>
    </source>
</evidence>
<evidence type="ECO:0000255" key="2">
    <source>
        <dbReference type="PROSITE-ProRule" id="PRU01319"/>
    </source>
</evidence>
<proteinExistence type="inferred from homology"/>
<protein>
    <recommendedName>
        <fullName evidence="1">Ribonuclease HII</fullName>
        <shortName evidence="1">RNase HII</shortName>
        <ecNumber evidence="1">3.1.26.4</ecNumber>
    </recommendedName>
</protein>
<sequence>MDNLIKDMRENLNSYSFKVVSDLVKELEVNRDNKAQIKELADLLKEDKRKNVSSLGNRLEKNLNNLIKEEERVKNMYLFDKSFGDYKYVAGVDEVGRGPLAGPIVSAAVILDSSDLDDIILYINDSKKLSEHKREELSEIIKEKALSYSISMCDSKEIDEKGIGYCNNEVFIKACEGLSIKPDLVLSDGYLIKNFNGENKHVIKGDTKSACIACASIIAKVYRDNIMKEYNKKYPQYDFEKNVGYGTKTHVDALKEVGPTEIHRMSFLKNIL</sequence>
<keyword id="KW-0963">Cytoplasm</keyword>
<keyword id="KW-0255">Endonuclease</keyword>
<keyword id="KW-0378">Hydrolase</keyword>
<keyword id="KW-0464">Manganese</keyword>
<keyword id="KW-0479">Metal-binding</keyword>
<keyword id="KW-0540">Nuclease</keyword>
<keyword id="KW-1185">Reference proteome</keyword>
<reference key="1">
    <citation type="journal article" date="2002" name="Proc. Natl. Acad. Sci. U.S.A.">
        <title>Complete genome sequence of Clostridium perfringens, an anaerobic flesh-eater.</title>
        <authorList>
            <person name="Shimizu T."/>
            <person name="Ohtani K."/>
            <person name="Hirakawa H."/>
            <person name="Ohshima K."/>
            <person name="Yamashita A."/>
            <person name="Shiba T."/>
            <person name="Ogasawara N."/>
            <person name="Hattori M."/>
            <person name="Kuhara S."/>
            <person name="Hayashi H."/>
        </authorList>
    </citation>
    <scope>NUCLEOTIDE SEQUENCE [LARGE SCALE GENOMIC DNA]</scope>
    <source>
        <strain>13 / Type A</strain>
    </source>
</reference>